<gene>
    <name evidence="1" type="primary">spoVG</name>
    <name type="ordered locus">AYWB_649</name>
</gene>
<protein>
    <recommendedName>
        <fullName evidence="1">Putative septation protein SpoVG</fullName>
    </recommendedName>
</protein>
<feature type="chain" id="PRO_1000062420" description="Putative septation protein SpoVG">
    <location>
        <begin position="1"/>
        <end position="99"/>
    </location>
</feature>
<comment type="function">
    <text evidence="1">Could be involved in septation.</text>
</comment>
<comment type="similarity">
    <text evidence="1">Belongs to the SpoVG family.</text>
</comment>
<keyword id="KW-0131">Cell cycle</keyword>
<keyword id="KW-0132">Cell division</keyword>
<keyword id="KW-0717">Septation</keyword>
<organism>
    <name type="scientific">Aster yellows witches'-broom phytoplasma (strain AYWB)</name>
    <dbReference type="NCBI Taxonomy" id="322098"/>
    <lineage>
        <taxon>Bacteria</taxon>
        <taxon>Bacillati</taxon>
        <taxon>Mycoplasmatota</taxon>
        <taxon>Mollicutes</taxon>
        <taxon>Acholeplasmatales</taxon>
        <taxon>Acholeplasmataceae</taxon>
        <taxon>Candidatus Phytoplasma</taxon>
        <taxon>16SrI (Aster yellows group)</taxon>
    </lineage>
</organism>
<reference key="1">
    <citation type="journal article" date="2006" name="J. Bacteriol.">
        <title>Living with genome instability: the adaptation of phytoplasmas to diverse environments of their insect and plant hosts.</title>
        <authorList>
            <person name="Bai X."/>
            <person name="Zhang J."/>
            <person name="Ewing A."/>
            <person name="Miller S.A."/>
            <person name="Jancso Radek A."/>
            <person name="Shevchenko D.V."/>
            <person name="Tsukerman K."/>
            <person name="Walunas T."/>
            <person name="Lapidus A."/>
            <person name="Campbell J.W."/>
            <person name="Hogenhout S.A."/>
        </authorList>
    </citation>
    <scope>NUCLEOTIDE SEQUENCE [LARGE SCALE GENOMIC DNA]</scope>
    <source>
        <strain>AYWB</strain>
    </source>
</reference>
<sequence>MKVTDVKVRKINGESRLRGVSSITFENQFVVNDIRIIEGERGIFIAMPSRKTSKGNFRDIAHPINSETRQIIENCIKTKYQDLLDNPPQEEDFSQNSEN</sequence>
<accession>Q2NIH7</accession>
<name>SP5G_AYWBP</name>
<dbReference type="EMBL" id="CP000061">
    <property type="protein sequence ID" value="ABC65766.1"/>
    <property type="molecule type" value="Genomic_DNA"/>
</dbReference>
<dbReference type="RefSeq" id="WP_011412927.1">
    <property type="nucleotide sequence ID" value="NC_007716.1"/>
</dbReference>
<dbReference type="SMR" id="Q2NIH7"/>
<dbReference type="STRING" id="322098.AYWB_649"/>
<dbReference type="KEGG" id="ayw:AYWB_649"/>
<dbReference type="eggNOG" id="COG2088">
    <property type="taxonomic scope" value="Bacteria"/>
</dbReference>
<dbReference type="HOGENOM" id="CLU_103669_2_1_14"/>
<dbReference type="OrthoDB" id="9796286at2"/>
<dbReference type="PhylomeDB" id="Q2NIH7"/>
<dbReference type="Proteomes" id="UP000001934">
    <property type="component" value="Chromosome"/>
</dbReference>
<dbReference type="GO" id="GO:0000917">
    <property type="term" value="P:division septum assembly"/>
    <property type="evidence" value="ECO:0007669"/>
    <property type="project" value="UniProtKB-KW"/>
</dbReference>
<dbReference type="GO" id="GO:0030435">
    <property type="term" value="P:sporulation resulting in formation of a cellular spore"/>
    <property type="evidence" value="ECO:0007669"/>
    <property type="project" value="InterPro"/>
</dbReference>
<dbReference type="Gene3D" id="3.30.1120.40">
    <property type="entry name" value="Stage V sporulation protein G"/>
    <property type="match status" value="1"/>
</dbReference>
<dbReference type="HAMAP" id="MF_00819">
    <property type="entry name" value="SpoVG"/>
    <property type="match status" value="1"/>
</dbReference>
<dbReference type="InterPro" id="IPR007170">
    <property type="entry name" value="SpoVG"/>
</dbReference>
<dbReference type="InterPro" id="IPR036751">
    <property type="entry name" value="SpoVG_sf"/>
</dbReference>
<dbReference type="NCBIfam" id="NF009749">
    <property type="entry name" value="PRK13259.1"/>
    <property type="match status" value="1"/>
</dbReference>
<dbReference type="PANTHER" id="PTHR38429">
    <property type="entry name" value="SEPTATION PROTEIN SPOVG-RELATED"/>
    <property type="match status" value="1"/>
</dbReference>
<dbReference type="PANTHER" id="PTHR38429:SF1">
    <property type="entry name" value="SEPTATION PROTEIN SPOVG-RELATED"/>
    <property type="match status" value="1"/>
</dbReference>
<dbReference type="Pfam" id="PF04026">
    <property type="entry name" value="SpoVG"/>
    <property type="match status" value="1"/>
</dbReference>
<dbReference type="SUPFAM" id="SSF160537">
    <property type="entry name" value="SpoVG-like"/>
    <property type="match status" value="1"/>
</dbReference>
<evidence type="ECO:0000255" key="1">
    <source>
        <dbReference type="HAMAP-Rule" id="MF_00819"/>
    </source>
</evidence>
<proteinExistence type="inferred from homology"/>